<comment type="function">
    <text evidence="4">Recombinant disintegrin rubistatin inhibits ADP-induced platelet aggregation. In addition, it strongly induces apoptosis, and inhibits cell migration and proliferation of the human cancer cell line SK-Mel-28.</text>
</comment>
<comment type="subunit">
    <text evidence="1">Monomer.</text>
</comment>
<comment type="subcellular location">
    <subcellularLocation>
        <location evidence="7">Secreted</location>
    </subcellularLocation>
</comment>
<comment type="tissue specificity">
    <text evidence="7">Expressed by the venom gland.</text>
</comment>
<comment type="miscellaneous">
    <text evidence="7">Negative results: does not induce chromatin fragmentation (apoptosis) in T24 and HeLa cells.</text>
</comment>
<comment type="miscellaneous">
    <text>The disintegrin belongs to the medium disintegrin subfamily.</text>
</comment>
<comment type="similarity">
    <text evidence="6">Belongs to the venom metalloproteinase (M12B) family. P-II subfamily. P-IIa sub-subfamily.</text>
</comment>
<dbReference type="EMBL" id="JN227479">
    <property type="protein sequence ID" value="AER36087.1"/>
    <property type="molecule type" value="mRNA"/>
</dbReference>
<dbReference type="SMR" id="H9M5U4"/>
<dbReference type="GO" id="GO:0005576">
    <property type="term" value="C:extracellular region"/>
    <property type="evidence" value="ECO:0007669"/>
    <property type="project" value="UniProtKB-SubCell"/>
</dbReference>
<dbReference type="GO" id="GO:0005886">
    <property type="term" value="C:plasma membrane"/>
    <property type="evidence" value="ECO:0007669"/>
    <property type="project" value="TreeGrafter"/>
</dbReference>
<dbReference type="GO" id="GO:0090729">
    <property type="term" value="F:toxin activity"/>
    <property type="evidence" value="ECO:0007669"/>
    <property type="project" value="UniProtKB-KW"/>
</dbReference>
<dbReference type="Gene3D" id="4.10.70.10">
    <property type="entry name" value="Disintegrin domain"/>
    <property type="match status" value="1"/>
</dbReference>
<dbReference type="InterPro" id="IPR018358">
    <property type="entry name" value="Disintegrin_CS"/>
</dbReference>
<dbReference type="InterPro" id="IPR001762">
    <property type="entry name" value="Disintegrin_dom"/>
</dbReference>
<dbReference type="InterPro" id="IPR036436">
    <property type="entry name" value="Disintegrin_dom_sf"/>
</dbReference>
<dbReference type="PANTHER" id="PTHR11905">
    <property type="entry name" value="ADAM A DISINTEGRIN AND METALLOPROTEASE DOMAIN"/>
    <property type="match status" value="1"/>
</dbReference>
<dbReference type="PANTHER" id="PTHR11905:SF32">
    <property type="entry name" value="DISINTEGRIN AND METALLOPROTEINASE DOMAIN-CONTAINING PROTEIN 28"/>
    <property type="match status" value="1"/>
</dbReference>
<dbReference type="Pfam" id="PF00200">
    <property type="entry name" value="Disintegrin"/>
    <property type="match status" value="1"/>
</dbReference>
<dbReference type="PRINTS" id="PR00289">
    <property type="entry name" value="DISINTEGRIN"/>
</dbReference>
<dbReference type="SMART" id="SM00050">
    <property type="entry name" value="DISIN"/>
    <property type="match status" value="1"/>
</dbReference>
<dbReference type="SUPFAM" id="SSF57552">
    <property type="entry name" value="Blood coagulation inhibitor (disintegrin)"/>
    <property type="match status" value="1"/>
</dbReference>
<dbReference type="PROSITE" id="PS00427">
    <property type="entry name" value="DISINTEGRIN_1"/>
    <property type="match status" value="1"/>
</dbReference>
<dbReference type="PROSITE" id="PS50214">
    <property type="entry name" value="DISINTEGRIN_2"/>
    <property type="match status" value="1"/>
</dbReference>
<proteinExistence type="evidence at transcript level"/>
<keyword id="KW-1217">Cell adhesion impairing toxin</keyword>
<keyword id="KW-1015">Disulfide bond</keyword>
<keyword id="KW-1199">Hemostasis impairing toxin</keyword>
<keyword id="KW-1201">Platelet aggregation inhibiting toxin</keyword>
<keyword id="KW-0964">Secreted</keyword>
<keyword id="KW-0800">Toxin</keyword>
<name>VM2_CRORU</name>
<reference key="1">
    <citation type="journal article" date="2012" name="Toxicon">
        <title>Recombinant rubistatin (r-Rub), an MVD disintegrin, inhibits cell migration and proliferation, and is a strong apoptotic inducer of the human melanoma cell line SK-Mel-28.</title>
        <authorList>
            <person name="Carey C.M."/>
            <person name="Bueno R."/>
            <person name="Gutierrez D.A."/>
            <person name="Petro C."/>
            <person name="Lucena S.E."/>
            <person name="Sanchez E.E."/>
            <person name="Soto J.G."/>
        </authorList>
    </citation>
    <scope>NUCLEOTIDE SEQUENCE [MRNA]</scope>
    <scope>FUNCTION OF RECOMBINANT PROTEIN</scope>
    <source>
        <tissue>Venom gland</tissue>
    </source>
</reference>
<feature type="chain" id="PRO_0000424616" description="Disintegrin rubistatin">
    <location>
        <begin position="1" status="less than"/>
        <end position="61"/>
    </location>
</feature>
<feature type="domain" description="Disintegrin" evidence="3">
    <location>
        <begin position="1" status="less than"/>
        <end position="61"/>
    </location>
</feature>
<feature type="short sequence motif" description="Cell attachment site; atypical (MVD)">
    <location>
        <begin position="39"/>
        <end position="41"/>
    </location>
</feature>
<feature type="disulfide bond" evidence="2">
    <location>
        <begin position="3"/>
        <end position="26"/>
    </location>
</feature>
<feature type="disulfide bond" evidence="2">
    <location>
        <begin status="unknown"/>
        <end position="4"/>
    </location>
</feature>
<feature type="disulfide bond" evidence="2">
    <location>
        <begin status="unknown"/>
        <end position="9"/>
    </location>
</feature>
<feature type="disulfide bond" evidence="2">
    <location>
        <begin position="17"/>
        <end position="23"/>
    </location>
</feature>
<feature type="disulfide bond" evidence="2">
    <location>
        <begin position="22"/>
        <end position="47"/>
    </location>
</feature>
<feature type="disulfide bond" evidence="2 3">
    <location>
        <begin position="35"/>
        <end position="54"/>
    </location>
</feature>
<feature type="non-terminal residue" evidence="6">
    <location>
        <position position="1"/>
    </location>
</feature>
<sequence>NPCCDAATCKMRPGSQCAEGLCCDQCRFMKKGTVCRVSMVDRNDDTCTGLSADCPRNGLYG</sequence>
<protein>
    <recommendedName>
        <fullName evidence="5">Disintegrin rubistatin</fullName>
    </recommendedName>
</protein>
<organism>
    <name type="scientific">Crotalus ruber ruber</name>
    <name type="common">Red diamond rattlesnake</name>
    <dbReference type="NCBI Taxonomy" id="8736"/>
    <lineage>
        <taxon>Eukaryota</taxon>
        <taxon>Metazoa</taxon>
        <taxon>Chordata</taxon>
        <taxon>Craniata</taxon>
        <taxon>Vertebrata</taxon>
        <taxon>Euteleostomi</taxon>
        <taxon>Lepidosauria</taxon>
        <taxon>Squamata</taxon>
        <taxon>Bifurcata</taxon>
        <taxon>Unidentata</taxon>
        <taxon>Episquamata</taxon>
        <taxon>Toxicofera</taxon>
        <taxon>Serpentes</taxon>
        <taxon>Colubroidea</taxon>
        <taxon>Viperidae</taxon>
        <taxon>Crotalinae</taxon>
        <taxon>Crotalus</taxon>
    </lineage>
</organism>
<evidence type="ECO:0000250" key="1"/>
<evidence type="ECO:0000250" key="2">
    <source>
        <dbReference type="UniProtKB" id="Q0NZX5"/>
    </source>
</evidence>
<evidence type="ECO:0000255" key="3">
    <source>
        <dbReference type="PROSITE-ProRule" id="PRU00068"/>
    </source>
</evidence>
<evidence type="ECO:0000269" key="4">
    <source>
    </source>
</evidence>
<evidence type="ECO:0000303" key="5">
    <source>
    </source>
</evidence>
<evidence type="ECO:0000305" key="6"/>
<evidence type="ECO:0000305" key="7">
    <source>
    </source>
</evidence>
<accession>H9M5U4</accession>